<evidence type="ECO:0000255" key="1">
    <source>
        <dbReference type="HAMAP-Rule" id="MF_01560"/>
    </source>
</evidence>
<gene>
    <name type="ordered locus">Bcer98_2651</name>
</gene>
<accession>A7GRX7</accession>
<feature type="chain" id="PRO_1000087802" description="UPF0358 protein Bcer98_2651">
    <location>
        <begin position="1"/>
        <end position="94"/>
    </location>
</feature>
<sequence length="94" mass="10758">MASETVTNHQEKALALLQADAEKILRLIKVQMDHLTMPQCPLYEEVLDTQMFGLSREVDFAVRLDLISEEQGKEMLGELERELSALHEAFTNKK</sequence>
<protein>
    <recommendedName>
        <fullName evidence="1">UPF0358 protein Bcer98_2651</fullName>
    </recommendedName>
</protein>
<reference key="1">
    <citation type="journal article" date="2008" name="Chem. Biol. Interact.">
        <title>Extending the Bacillus cereus group genomics to putative food-borne pathogens of different toxicity.</title>
        <authorList>
            <person name="Lapidus A."/>
            <person name="Goltsman E."/>
            <person name="Auger S."/>
            <person name="Galleron N."/>
            <person name="Segurens B."/>
            <person name="Dossat C."/>
            <person name="Land M.L."/>
            <person name="Broussolle V."/>
            <person name="Brillard J."/>
            <person name="Guinebretiere M.-H."/>
            <person name="Sanchis V."/>
            <person name="Nguen-the C."/>
            <person name="Lereclus D."/>
            <person name="Richardson P."/>
            <person name="Wincker P."/>
            <person name="Weissenbach J."/>
            <person name="Ehrlich S.D."/>
            <person name="Sorokin A."/>
        </authorList>
    </citation>
    <scope>NUCLEOTIDE SEQUENCE [LARGE SCALE GENOMIC DNA]</scope>
    <source>
        <strain>DSM 22905 / CIP 110041 / 391-98 / NVH 391-98</strain>
    </source>
</reference>
<comment type="similarity">
    <text evidence="1">Belongs to the UPF0358 family.</text>
</comment>
<proteinExistence type="inferred from homology"/>
<organism>
    <name type="scientific">Bacillus cytotoxicus (strain DSM 22905 / CIP 110041 / 391-98 / NVH 391-98)</name>
    <dbReference type="NCBI Taxonomy" id="315749"/>
    <lineage>
        <taxon>Bacteria</taxon>
        <taxon>Bacillati</taxon>
        <taxon>Bacillota</taxon>
        <taxon>Bacilli</taxon>
        <taxon>Bacillales</taxon>
        <taxon>Bacillaceae</taxon>
        <taxon>Bacillus</taxon>
        <taxon>Bacillus cereus group</taxon>
    </lineage>
</organism>
<name>Y2651_BACCN</name>
<dbReference type="EMBL" id="CP000764">
    <property type="protein sequence ID" value="ABS22885.1"/>
    <property type="molecule type" value="Genomic_DNA"/>
</dbReference>
<dbReference type="RefSeq" id="WP_012095099.1">
    <property type="nucleotide sequence ID" value="NC_009674.1"/>
</dbReference>
<dbReference type="SMR" id="A7GRX7"/>
<dbReference type="STRING" id="315749.Bcer98_2651"/>
<dbReference type="GeneID" id="33897906"/>
<dbReference type="KEGG" id="bcy:Bcer98_2651"/>
<dbReference type="eggNOG" id="COG4838">
    <property type="taxonomic scope" value="Bacteria"/>
</dbReference>
<dbReference type="HOGENOM" id="CLU_160493_1_0_9"/>
<dbReference type="OrthoDB" id="2135235at2"/>
<dbReference type="Proteomes" id="UP000002300">
    <property type="component" value="Chromosome"/>
</dbReference>
<dbReference type="Gene3D" id="1.10.287.750">
    <property type="entry name" value="SO2669-like"/>
    <property type="match status" value="1"/>
</dbReference>
<dbReference type="HAMAP" id="MF_01560">
    <property type="entry name" value="UPF0358"/>
    <property type="match status" value="1"/>
</dbReference>
<dbReference type="InterPro" id="IPR009983">
    <property type="entry name" value="UPF0358"/>
</dbReference>
<dbReference type="InterPro" id="IPR036270">
    <property type="entry name" value="UPF0358_sf"/>
</dbReference>
<dbReference type="NCBIfam" id="NF010187">
    <property type="entry name" value="PRK13666.1"/>
    <property type="match status" value="1"/>
</dbReference>
<dbReference type="Pfam" id="PF07408">
    <property type="entry name" value="DUF1507"/>
    <property type="match status" value="1"/>
</dbReference>
<dbReference type="SUPFAM" id="SSF140404">
    <property type="entry name" value="EF2458-like"/>
    <property type="match status" value="1"/>
</dbReference>